<reference key="1">
    <citation type="journal article" date="2009" name="PLoS ONE">
        <title>Complete genome sequence of Francisella tularensis subspecies holarctica FTNF002-00.</title>
        <authorList>
            <person name="Barabote R.D."/>
            <person name="Xie G."/>
            <person name="Brettin T.S."/>
            <person name="Hinrichs S.H."/>
            <person name="Fey P.D."/>
            <person name="Jay J.J."/>
            <person name="Engle J.L."/>
            <person name="Godbole S.D."/>
            <person name="Noronha J.M."/>
            <person name="Scheuermann R.H."/>
            <person name="Zhou L.W."/>
            <person name="Lion C."/>
            <person name="Dempsey M.P."/>
        </authorList>
    </citation>
    <scope>NUCLEOTIDE SEQUENCE [LARGE SCALE GENOMIC DNA]</scope>
    <source>
        <strain>FTNF002-00 / FTA</strain>
    </source>
</reference>
<sequence length="313" mass="34906">MTLQQIKEIYLRPLTELILKALEIHNKNFGNDIELCSLKSIKTGTCPEDCKYCPQSGHYNTSIEKHKLLDKDSILAEAKNAKDAGSKRFCMGAAWKHIPKKDFDQVAEIITEVKNLGLETCVTLGSINADEATKLKQAGLDYYNHNLDTSREFYPEIITTRKFEERIETIRNVANANINVCCGGILGMGESLDDRFNLLLELLQLPAAPKSIPINTLIPVKGTPLGDKYTNAQIDSFELVRFIATTRILFPQARLRLSAGRENMSLETQTLCFLAGINSIFYGNKLLTENNATVNSDNFLLAKLGLKSNAELC</sequence>
<proteinExistence type="inferred from homology"/>
<gene>
    <name evidence="1" type="primary">bioB</name>
    <name type="ordered locus">FTA_1345</name>
</gene>
<organism>
    <name type="scientific">Francisella tularensis subsp. holarctica (strain FTNF002-00 / FTA)</name>
    <dbReference type="NCBI Taxonomy" id="458234"/>
    <lineage>
        <taxon>Bacteria</taxon>
        <taxon>Pseudomonadati</taxon>
        <taxon>Pseudomonadota</taxon>
        <taxon>Gammaproteobacteria</taxon>
        <taxon>Thiotrichales</taxon>
        <taxon>Francisellaceae</taxon>
        <taxon>Francisella</taxon>
    </lineage>
</organism>
<dbReference type="EC" id="2.8.1.6" evidence="1"/>
<dbReference type="EMBL" id="CP000803">
    <property type="protein sequence ID" value="ABU61820.1"/>
    <property type="molecule type" value="Genomic_DNA"/>
</dbReference>
<dbReference type="RefSeq" id="WP_003016407.1">
    <property type="nucleotide sequence ID" value="NC_009749.1"/>
</dbReference>
<dbReference type="SMR" id="A7NCW7"/>
<dbReference type="KEGG" id="fta:FTA_1345"/>
<dbReference type="HOGENOM" id="CLU_033172_1_2_6"/>
<dbReference type="UniPathway" id="UPA00078">
    <property type="reaction ID" value="UER00162"/>
</dbReference>
<dbReference type="GO" id="GO:0051537">
    <property type="term" value="F:2 iron, 2 sulfur cluster binding"/>
    <property type="evidence" value="ECO:0007669"/>
    <property type="project" value="UniProtKB-KW"/>
</dbReference>
<dbReference type="GO" id="GO:0051539">
    <property type="term" value="F:4 iron, 4 sulfur cluster binding"/>
    <property type="evidence" value="ECO:0007669"/>
    <property type="project" value="UniProtKB-KW"/>
</dbReference>
<dbReference type="GO" id="GO:0004076">
    <property type="term" value="F:biotin synthase activity"/>
    <property type="evidence" value="ECO:0007669"/>
    <property type="project" value="UniProtKB-UniRule"/>
</dbReference>
<dbReference type="GO" id="GO:0005506">
    <property type="term" value="F:iron ion binding"/>
    <property type="evidence" value="ECO:0007669"/>
    <property type="project" value="UniProtKB-UniRule"/>
</dbReference>
<dbReference type="GO" id="GO:0009102">
    <property type="term" value="P:biotin biosynthetic process"/>
    <property type="evidence" value="ECO:0007669"/>
    <property type="project" value="UniProtKB-UniRule"/>
</dbReference>
<dbReference type="CDD" id="cd01335">
    <property type="entry name" value="Radical_SAM"/>
    <property type="match status" value="1"/>
</dbReference>
<dbReference type="Gene3D" id="3.20.20.70">
    <property type="entry name" value="Aldolase class I"/>
    <property type="match status" value="1"/>
</dbReference>
<dbReference type="HAMAP" id="MF_01694">
    <property type="entry name" value="BioB"/>
    <property type="match status" value="1"/>
</dbReference>
<dbReference type="InterPro" id="IPR013785">
    <property type="entry name" value="Aldolase_TIM"/>
</dbReference>
<dbReference type="InterPro" id="IPR010722">
    <property type="entry name" value="BATS_dom"/>
</dbReference>
<dbReference type="InterPro" id="IPR002684">
    <property type="entry name" value="Biotin_synth/BioAB"/>
</dbReference>
<dbReference type="InterPro" id="IPR024177">
    <property type="entry name" value="Biotin_synthase"/>
</dbReference>
<dbReference type="InterPro" id="IPR006638">
    <property type="entry name" value="Elp3/MiaA/NifB-like_rSAM"/>
</dbReference>
<dbReference type="InterPro" id="IPR007197">
    <property type="entry name" value="rSAM"/>
</dbReference>
<dbReference type="NCBIfam" id="TIGR00433">
    <property type="entry name" value="bioB"/>
    <property type="match status" value="1"/>
</dbReference>
<dbReference type="PANTHER" id="PTHR22976">
    <property type="entry name" value="BIOTIN SYNTHASE"/>
    <property type="match status" value="1"/>
</dbReference>
<dbReference type="PANTHER" id="PTHR22976:SF2">
    <property type="entry name" value="BIOTIN SYNTHASE, MITOCHONDRIAL"/>
    <property type="match status" value="1"/>
</dbReference>
<dbReference type="Pfam" id="PF06968">
    <property type="entry name" value="BATS"/>
    <property type="match status" value="1"/>
</dbReference>
<dbReference type="Pfam" id="PF04055">
    <property type="entry name" value="Radical_SAM"/>
    <property type="match status" value="1"/>
</dbReference>
<dbReference type="PIRSF" id="PIRSF001619">
    <property type="entry name" value="Biotin_synth"/>
    <property type="match status" value="1"/>
</dbReference>
<dbReference type="SFLD" id="SFLDF00272">
    <property type="entry name" value="biotin_synthase"/>
    <property type="match status" value="1"/>
</dbReference>
<dbReference type="SFLD" id="SFLDS00029">
    <property type="entry name" value="Radical_SAM"/>
    <property type="match status" value="1"/>
</dbReference>
<dbReference type="SMART" id="SM00876">
    <property type="entry name" value="BATS"/>
    <property type="match status" value="1"/>
</dbReference>
<dbReference type="SMART" id="SM00729">
    <property type="entry name" value="Elp3"/>
    <property type="match status" value="1"/>
</dbReference>
<dbReference type="SUPFAM" id="SSF102114">
    <property type="entry name" value="Radical SAM enzymes"/>
    <property type="match status" value="1"/>
</dbReference>
<dbReference type="PROSITE" id="PS51918">
    <property type="entry name" value="RADICAL_SAM"/>
    <property type="match status" value="1"/>
</dbReference>
<comment type="function">
    <text evidence="1">Catalyzes the conversion of dethiobiotin (DTB) to biotin by the insertion of a sulfur atom into dethiobiotin via a radical-based mechanism.</text>
</comment>
<comment type="catalytic activity">
    <reaction evidence="1">
        <text>(4R,5S)-dethiobiotin + (sulfur carrier)-SH + 2 reduced [2Fe-2S]-[ferredoxin] + 2 S-adenosyl-L-methionine = (sulfur carrier)-H + biotin + 2 5'-deoxyadenosine + 2 L-methionine + 2 oxidized [2Fe-2S]-[ferredoxin]</text>
        <dbReference type="Rhea" id="RHEA:22060"/>
        <dbReference type="Rhea" id="RHEA-COMP:10000"/>
        <dbReference type="Rhea" id="RHEA-COMP:10001"/>
        <dbReference type="Rhea" id="RHEA-COMP:14737"/>
        <dbReference type="Rhea" id="RHEA-COMP:14739"/>
        <dbReference type="ChEBI" id="CHEBI:17319"/>
        <dbReference type="ChEBI" id="CHEBI:29917"/>
        <dbReference type="ChEBI" id="CHEBI:33737"/>
        <dbReference type="ChEBI" id="CHEBI:33738"/>
        <dbReference type="ChEBI" id="CHEBI:57586"/>
        <dbReference type="ChEBI" id="CHEBI:57844"/>
        <dbReference type="ChEBI" id="CHEBI:59789"/>
        <dbReference type="ChEBI" id="CHEBI:64428"/>
        <dbReference type="ChEBI" id="CHEBI:149473"/>
        <dbReference type="EC" id="2.8.1.6"/>
    </reaction>
</comment>
<comment type="cofactor">
    <cofactor evidence="1">
        <name>[4Fe-4S] cluster</name>
        <dbReference type="ChEBI" id="CHEBI:49883"/>
    </cofactor>
    <text evidence="1">Binds 1 [4Fe-4S] cluster. The cluster is coordinated with 3 cysteines and an exchangeable S-adenosyl-L-methionine.</text>
</comment>
<comment type="cofactor">
    <cofactor evidence="1">
        <name>[2Fe-2S] cluster</name>
        <dbReference type="ChEBI" id="CHEBI:190135"/>
    </cofactor>
    <text evidence="1">Binds 1 [2Fe-2S] cluster. The cluster is coordinated with 3 cysteines and 1 arginine.</text>
</comment>
<comment type="pathway">
    <text evidence="1">Cofactor biosynthesis; biotin biosynthesis; biotin from 7,8-diaminononanoate: step 2/2.</text>
</comment>
<comment type="subunit">
    <text evidence="1">Homodimer.</text>
</comment>
<comment type="similarity">
    <text evidence="1">Belongs to the radical SAM superfamily. Biotin synthase family.</text>
</comment>
<name>BIOB_FRATF</name>
<keyword id="KW-0001">2Fe-2S</keyword>
<keyword id="KW-0004">4Fe-4S</keyword>
<keyword id="KW-0093">Biotin biosynthesis</keyword>
<keyword id="KW-0408">Iron</keyword>
<keyword id="KW-0411">Iron-sulfur</keyword>
<keyword id="KW-0479">Metal-binding</keyword>
<keyword id="KW-0949">S-adenosyl-L-methionine</keyword>
<keyword id="KW-0808">Transferase</keyword>
<evidence type="ECO:0000255" key="1">
    <source>
        <dbReference type="HAMAP-Rule" id="MF_01694"/>
    </source>
</evidence>
<evidence type="ECO:0000255" key="2">
    <source>
        <dbReference type="PROSITE-ProRule" id="PRU01266"/>
    </source>
</evidence>
<feature type="chain" id="PRO_0000381392" description="Biotin synthase">
    <location>
        <begin position="1"/>
        <end position="313"/>
    </location>
</feature>
<feature type="domain" description="Radical SAM core" evidence="2">
    <location>
        <begin position="28"/>
        <end position="258"/>
    </location>
</feature>
<feature type="binding site" evidence="1">
    <location>
        <position position="46"/>
    </location>
    <ligand>
        <name>[4Fe-4S] cluster</name>
        <dbReference type="ChEBI" id="CHEBI:49883"/>
        <note>4Fe-4S-S-AdoMet</note>
    </ligand>
</feature>
<feature type="binding site" evidence="1">
    <location>
        <position position="50"/>
    </location>
    <ligand>
        <name>[4Fe-4S] cluster</name>
        <dbReference type="ChEBI" id="CHEBI:49883"/>
        <note>4Fe-4S-S-AdoMet</note>
    </ligand>
</feature>
<feature type="binding site" evidence="1">
    <location>
        <position position="53"/>
    </location>
    <ligand>
        <name>[4Fe-4S] cluster</name>
        <dbReference type="ChEBI" id="CHEBI:49883"/>
        <note>4Fe-4S-S-AdoMet</note>
    </ligand>
</feature>
<feature type="binding site" evidence="1">
    <location>
        <position position="90"/>
    </location>
    <ligand>
        <name>[2Fe-2S] cluster</name>
        <dbReference type="ChEBI" id="CHEBI:190135"/>
    </ligand>
</feature>
<feature type="binding site" evidence="1">
    <location>
        <position position="121"/>
    </location>
    <ligand>
        <name>[2Fe-2S] cluster</name>
        <dbReference type="ChEBI" id="CHEBI:190135"/>
    </ligand>
</feature>
<feature type="binding site" evidence="1">
    <location>
        <position position="181"/>
    </location>
    <ligand>
        <name>[2Fe-2S] cluster</name>
        <dbReference type="ChEBI" id="CHEBI:190135"/>
    </ligand>
</feature>
<feature type="binding site" evidence="1">
    <location>
        <position position="256"/>
    </location>
    <ligand>
        <name>[2Fe-2S] cluster</name>
        <dbReference type="ChEBI" id="CHEBI:190135"/>
    </ligand>
</feature>
<accession>A7NCW7</accession>
<protein>
    <recommendedName>
        <fullName evidence="1">Biotin synthase</fullName>
        <ecNumber evidence="1">2.8.1.6</ecNumber>
    </recommendedName>
</protein>